<organism>
    <name type="scientific">Brucella suis (strain ATCC 23445 / NCTC 10510)</name>
    <dbReference type="NCBI Taxonomy" id="470137"/>
    <lineage>
        <taxon>Bacteria</taxon>
        <taxon>Pseudomonadati</taxon>
        <taxon>Pseudomonadota</taxon>
        <taxon>Alphaproteobacteria</taxon>
        <taxon>Hyphomicrobiales</taxon>
        <taxon>Brucellaceae</taxon>
        <taxon>Brucella/Ochrobactrum group</taxon>
        <taxon>Brucella</taxon>
    </lineage>
</organism>
<feature type="chain" id="PRO_0000375491" description="Succinyl-diaminopimelate desuccinylase">
    <location>
        <begin position="1"/>
        <end position="395"/>
    </location>
</feature>
<feature type="active site" evidence="1">
    <location>
        <position position="76"/>
    </location>
</feature>
<feature type="active site" description="Proton acceptor" evidence="1">
    <location>
        <position position="141"/>
    </location>
</feature>
<feature type="binding site" evidence="1">
    <location>
        <position position="74"/>
    </location>
    <ligand>
        <name>Zn(2+)</name>
        <dbReference type="ChEBI" id="CHEBI:29105"/>
        <label>1</label>
    </ligand>
</feature>
<feature type="binding site" evidence="1">
    <location>
        <position position="107"/>
    </location>
    <ligand>
        <name>Zn(2+)</name>
        <dbReference type="ChEBI" id="CHEBI:29105"/>
        <label>1</label>
    </ligand>
</feature>
<feature type="binding site" evidence="1">
    <location>
        <position position="107"/>
    </location>
    <ligand>
        <name>Zn(2+)</name>
        <dbReference type="ChEBI" id="CHEBI:29105"/>
        <label>2</label>
    </ligand>
</feature>
<feature type="binding site" evidence="1">
    <location>
        <position position="142"/>
    </location>
    <ligand>
        <name>Zn(2+)</name>
        <dbReference type="ChEBI" id="CHEBI:29105"/>
        <label>2</label>
    </ligand>
</feature>
<feature type="binding site" evidence="1">
    <location>
        <position position="170"/>
    </location>
    <ligand>
        <name>Zn(2+)</name>
        <dbReference type="ChEBI" id="CHEBI:29105"/>
        <label>1</label>
    </ligand>
</feature>
<feature type="binding site" evidence="1">
    <location>
        <position position="368"/>
    </location>
    <ligand>
        <name>Zn(2+)</name>
        <dbReference type="ChEBI" id="CHEBI:29105"/>
        <label>2</label>
    </ligand>
</feature>
<proteinExistence type="inferred from homology"/>
<comment type="function">
    <text evidence="1">Catalyzes the hydrolysis of N-succinyl-L,L-diaminopimelic acid (SDAP), forming succinate and LL-2,6-diaminopimelate (DAP), an intermediate involved in the bacterial biosynthesis of lysine and meso-diaminopimelic acid, an essential component of bacterial cell walls.</text>
</comment>
<comment type="catalytic activity">
    <reaction evidence="1">
        <text>N-succinyl-(2S,6S)-2,6-diaminopimelate + H2O = (2S,6S)-2,6-diaminopimelate + succinate</text>
        <dbReference type="Rhea" id="RHEA:22608"/>
        <dbReference type="ChEBI" id="CHEBI:15377"/>
        <dbReference type="ChEBI" id="CHEBI:30031"/>
        <dbReference type="ChEBI" id="CHEBI:57609"/>
        <dbReference type="ChEBI" id="CHEBI:58087"/>
        <dbReference type="EC" id="3.5.1.18"/>
    </reaction>
</comment>
<comment type="cofactor">
    <cofactor evidence="1">
        <name>Zn(2+)</name>
        <dbReference type="ChEBI" id="CHEBI:29105"/>
    </cofactor>
    <cofactor evidence="1">
        <name>Co(2+)</name>
        <dbReference type="ChEBI" id="CHEBI:48828"/>
    </cofactor>
    <text evidence="1">Binds 2 Zn(2+) or Co(2+) ions per subunit.</text>
</comment>
<comment type="pathway">
    <text evidence="1">Amino-acid biosynthesis; L-lysine biosynthesis via DAP pathway; LL-2,6-diaminopimelate from (S)-tetrahydrodipicolinate (succinylase route): step 3/3.</text>
</comment>
<comment type="subunit">
    <text evidence="1">Homodimer.</text>
</comment>
<comment type="similarity">
    <text evidence="1">Belongs to the peptidase M20A family. DapE subfamily.</text>
</comment>
<reference key="1">
    <citation type="submission" date="2007-12" db="EMBL/GenBank/DDBJ databases">
        <title>Brucella suis ATCC 23445 whole genome shotgun sequencing project.</title>
        <authorList>
            <person name="Setubal J.C."/>
            <person name="Bowns C."/>
            <person name="Boyle S."/>
            <person name="Crasta O.R."/>
            <person name="Czar M.J."/>
            <person name="Dharmanolla C."/>
            <person name="Gillespie J.J."/>
            <person name="Kenyon R.W."/>
            <person name="Lu J."/>
            <person name="Mane S."/>
            <person name="Mohapatra S."/>
            <person name="Nagrani S."/>
            <person name="Purkayastha A."/>
            <person name="Rajasimha H.K."/>
            <person name="Shallom J.M."/>
            <person name="Shallom S."/>
            <person name="Shukla M."/>
            <person name="Snyder E.E."/>
            <person name="Sobral B.W."/>
            <person name="Wattam A.R."/>
            <person name="Will R."/>
            <person name="Williams K."/>
            <person name="Yoo H."/>
            <person name="Bruce D."/>
            <person name="Detter C."/>
            <person name="Munk C."/>
            <person name="Brettin T.S."/>
        </authorList>
    </citation>
    <scope>NUCLEOTIDE SEQUENCE [LARGE SCALE GENOMIC DNA]</scope>
    <source>
        <strain>ATCC 23445 / NCTC 10510</strain>
    </source>
</reference>
<dbReference type="EC" id="3.5.1.18" evidence="1"/>
<dbReference type="EMBL" id="CP000912">
    <property type="protein sequence ID" value="ABY39977.1"/>
    <property type="molecule type" value="Genomic_DNA"/>
</dbReference>
<dbReference type="RefSeq" id="WP_004687037.1">
    <property type="nucleotide sequence ID" value="NC_010167.1"/>
</dbReference>
<dbReference type="SMR" id="A9WW41"/>
<dbReference type="GeneID" id="97534920"/>
<dbReference type="KEGG" id="bmt:BSUIS_B1026"/>
<dbReference type="HOGENOM" id="CLU_021802_4_0_5"/>
<dbReference type="UniPathway" id="UPA00034">
    <property type="reaction ID" value="UER00021"/>
</dbReference>
<dbReference type="Proteomes" id="UP000008545">
    <property type="component" value="Chromosome II"/>
</dbReference>
<dbReference type="GO" id="GO:0008777">
    <property type="term" value="F:acetylornithine deacetylase activity"/>
    <property type="evidence" value="ECO:0007669"/>
    <property type="project" value="TreeGrafter"/>
</dbReference>
<dbReference type="GO" id="GO:0050897">
    <property type="term" value="F:cobalt ion binding"/>
    <property type="evidence" value="ECO:0007669"/>
    <property type="project" value="UniProtKB-UniRule"/>
</dbReference>
<dbReference type="GO" id="GO:0009014">
    <property type="term" value="F:succinyl-diaminopimelate desuccinylase activity"/>
    <property type="evidence" value="ECO:0007669"/>
    <property type="project" value="UniProtKB-UniRule"/>
</dbReference>
<dbReference type="GO" id="GO:0008270">
    <property type="term" value="F:zinc ion binding"/>
    <property type="evidence" value="ECO:0007669"/>
    <property type="project" value="UniProtKB-UniRule"/>
</dbReference>
<dbReference type="GO" id="GO:0019877">
    <property type="term" value="P:diaminopimelate biosynthetic process"/>
    <property type="evidence" value="ECO:0007669"/>
    <property type="project" value="UniProtKB-UniRule"/>
</dbReference>
<dbReference type="GO" id="GO:0006526">
    <property type="term" value="P:L-arginine biosynthetic process"/>
    <property type="evidence" value="ECO:0007669"/>
    <property type="project" value="TreeGrafter"/>
</dbReference>
<dbReference type="GO" id="GO:0009089">
    <property type="term" value="P:lysine biosynthetic process via diaminopimelate"/>
    <property type="evidence" value="ECO:0007669"/>
    <property type="project" value="UniProtKB-UniRule"/>
</dbReference>
<dbReference type="CDD" id="cd03891">
    <property type="entry name" value="M20_DapE_proteobac"/>
    <property type="match status" value="1"/>
</dbReference>
<dbReference type="Gene3D" id="3.30.70.360">
    <property type="match status" value="1"/>
</dbReference>
<dbReference type="Gene3D" id="3.40.630.10">
    <property type="entry name" value="Zn peptidases"/>
    <property type="match status" value="2"/>
</dbReference>
<dbReference type="HAMAP" id="MF_01690">
    <property type="entry name" value="DapE"/>
    <property type="match status" value="1"/>
</dbReference>
<dbReference type="InterPro" id="IPR001261">
    <property type="entry name" value="ArgE/DapE_CS"/>
</dbReference>
<dbReference type="InterPro" id="IPR036264">
    <property type="entry name" value="Bact_exopeptidase_dim_dom"/>
</dbReference>
<dbReference type="InterPro" id="IPR005941">
    <property type="entry name" value="DapE_proteobac"/>
</dbReference>
<dbReference type="InterPro" id="IPR002933">
    <property type="entry name" value="Peptidase_M20"/>
</dbReference>
<dbReference type="InterPro" id="IPR011650">
    <property type="entry name" value="Peptidase_M20_dimer"/>
</dbReference>
<dbReference type="InterPro" id="IPR050072">
    <property type="entry name" value="Peptidase_M20A"/>
</dbReference>
<dbReference type="NCBIfam" id="TIGR01246">
    <property type="entry name" value="dapE_proteo"/>
    <property type="match status" value="1"/>
</dbReference>
<dbReference type="NCBIfam" id="NF009557">
    <property type="entry name" value="PRK13009.1"/>
    <property type="match status" value="1"/>
</dbReference>
<dbReference type="PANTHER" id="PTHR43808">
    <property type="entry name" value="ACETYLORNITHINE DEACETYLASE"/>
    <property type="match status" value="1"/>
</dbReference>
<dbReference type="PANTHER" id="PTHR43808:SF31">
    <property type="entry name" value="N-ACETYL-L-CITRULLINE DEACETYLASE"/>
    <property type="match status" value="1"/>
</dbReference>
<dbReference type="Pfam" id="PF07687">
    <property type="entry name" value="M20_dimer"/>
    <property type="match status" value="1"/>
</dbReference>
<dbReference type="Pfam" id="PF01546">
    <property type="entry name" value="Peptidase_M20"/>
    <property type="match status" value="1"/>
</dbReference>
<dbReference type="SUPFAM" id="SSF55031">
    <property type="entry name" value="Bacterial exopeptidase dimerisation domain"/>
    <property type="match status" value="1"/>
</dbReference>
<dbReference type="SUPFAM" id="SSF53187">
    <property type="entry name" value="Zn-dependent exopeptidases"/>
    <property type="match status" value="1"/>
</dbReference>
<dbReference type="PROSITE" id="PS00758">
    <property type="entry name" value="ARGE_DAPE_CPG2_1"/>
    <property type="match status" value="1"/>
</dbReference>
<dbReference type="PROSITE" id="PS00759">
    <property type="entry name" value="ARGE_DAPE_CPG2_2"/>
    <property type="match status" value="1"/>
</dbReference>
<accession>A9WW41</accession>
<protein>
    <recommendedName>
        <fullName evidence="1">Succinyl-diaminopimelate desuccinylase</fullName>
        <shortName evidence="1">SDAP desuccinylase</shortName>
        <ecNumber evidence="1">3.5.1.18</ecNumber>
    </recommendedName>
    <alternativeName>
        <fullName evidence="1">N-succinyl-LL-2,6-diaminoheptanedioate amidohydrolase</fullName>
    </alternativeName>
</protein>
<keyword id="KW-0028">Amino-acid biosynthesis</keyword>
<keyword id="KW-0170">Cobalt</keyword>
<keyword id="KW-0220">Diaminopimelate biosynthesis</keyword>
<keyword id="KW-0378">Hydrolase</keyword>
<keyword id="KW-0457">Lysine biosynthesis</keyword>
<keyword id="KW-0479">Metal-binding</keyword>
<keyword id="KW-0862">Zinc</keyword>
<name>DAPE_BRUSI</name>
<gene>
    <name evidence="1" type="primary">dapE</name>
    <name type="ordered locus">BSUIS_B1026</name>
</gene>
<evidence type="ECO:0000255" key="1">
    <source>
        <dbReference type="HAMAP-Rule" id="MF_01690"/>
    </source>
</evidence>
<sequence>MTLPVNPADNLAALIRCPSVTPAEGGALTALEKMLKLMGFSANRPVFSDDNTPDIENLYARKSGNGPHLMFAGHTDVVPPGDEKDWKHPPFAAAIEDGVMYGRGAVDMKGGIACFVAAVARHIEKHGNIKGSISFLITGDEEGPAVNGTVKLLEWAKQRGESWDASIVGEPTNPNALGDMIKIGRRGSLSGTITVHGVQGHAAYPHLAENPVRGIVTLVDSLLYPAFDEGTANFQASNLEVTTIDVGNKATNVIPNKATASFNIRFNDTWTAESLQAEIISRLERAARDNRLRQGRETPIKYELTWRERPSHVFLTHDEKLIGTLTASVEAVTGKRPELSTSGGTSDARFIKDYCPVVEFGLTGQTMHMVDERVALADLEGLTQIYERFIADFFG</sequence>